<comment type="catalytic activity">
    <reaction evidence="4 5">
        <text>diphosphate + H2O = 2 phosphate + H(+)</text>
        <dbReference type="Rhea" id="RHEA:24576"/>
        <dbReference type="ChEBI" id="CHEBI:15377"/>
        <dbReference type="ChEBI" id="CHEBI:15378"/>
        <dbReference type="ChEBI" id="CHEBI:33019"/>
        <dbReference type="ChEBI" id="CHEBI:43474"/>
        <dbReference type="EC" id="3.6.1.1"/>
    </reaction>
</comment>
<comment type="cofactor">
    <cofactor evidence="5">
        <name>Co(2+)</name>
        <dbReference type="ChEBI" id="CHEBI:48828"/>
    </cofactor>
    <cofactor evidence="5">
        <name>Mn(2+)</name>
        <dbReference type="ChEBI" id="CHEBI:29035"/>
    </cofactor>
    <text evidence="5">Binds tightly a transition metal ion; prefers Co(2+) over Mn(2+).</text>
</comment>
<comment type="cofactor">
    <cofactor evidence="5">
        <name>Mg(2+)</name>
        <dbReference type="ChEBI" id="CHEBI:18420"/>
    </cofactor>
    <text evidence="5">Mg(2+) ions are required for optimal catalytic activity.</text>
</comment>
<comment type="activity regulation">
    <text evidence="4 5">Inhibited by AMP and ADP with 25% and 35% of activity remaining, respectively, at saturating conditions. Activated 5-fold by diadenosine polyphosphates(Ap[n]A) with n&gt;2 (Ap3A, Ap4A, Ap5A, Ap6A) at saturating conditions.</text>
</comment>
<comment type="biophysicochemical properties">
    <kinetics>
        <KM evidence="5">50 uM for pyrophosphate</KM>
    </kinetics>
</comment>
<comment type="subunit">
    <text evidence="4">Homodimer.</text>
</comment>
<comment type="similarity">
    <text evidence="2">Belongs to the PPase family.</text>
</comment>
<dbReference type="EC" id="3.6.1.1" evidence="4 5"/>
<dbReference type="EMBL" id="BA000016">
    <property type="protein sequence ID" value="BAB81761.1"/>
    <property type="molecule type" value="Genomic_DNA"/>
</dbReference>
<dbReference type="RefSeq" id="WP_003451432.1">
    <property type="nucleotide sequence ID" value="NC_003366.1"/>
</dbReference>
<dbReference type="PDB" id="3L2B">
    <property type="method" value="X-ray"/>
    <property type="resolution" value="2.27 A"/>
    <property type="chains" value="A/B=66-306"/>
</dbReference>
<dbReference type="PDB" id="3L31">
    <property type="method" value="X-ray"/>
    <property type="resolution" value="2.30 A"/>
    <property type="chains" value="A/B=66-306"/>
</dbReference>
<dbReference type="PDBsum" id="3L2B"/>
<dbReference type="PDBsum" id="3L31"/>
<dbReference type="SMR" id="Q8XIQ9"/>
<dbReference type="STRING" id="195102.gene:10491325"/>
<dbReference type="KEGG" id="cpe:CPE2055"/>
<dbReference type="HOGENOM" id="CLU_025243_1_0_9"/>
<dbReference type="BRENDA" id="3.6.1.1">
    <property type="organism ID" value="1503"/>
</dbReference>
<dbReference type="SABIO-RK" id="Q8XIQ9"/>
<dbReference type="EvolutionaryTrace" id="Q8XIQ9"/>
<dbReference type="Proteomes" id="UP000000818">
    <property type="component" value="Chromosome"/>
</dbReference>
<dbReference type="GO" id="GO:0005737">
    <property type="term" value="C:cytoplasm"/>
    <property type="evidence" value="ECO:0007669"/>
    <property type="project" value="InterPro"/>
</dbReference>
<dbReference type="GO" id="GO:0016208">
    <property type="term" value="F:AMP binding"/>
    <property type="evidence" value="ECO:0000314"/>
    <property type="project" value="UniProtKB"/>
</dbReference>
<dbReference type="GO" id="GO:0050897">
    <property type="term" value="F:cobalt ion binding"/>
    <property type="evidence" value="ECO:0000314"/>
    <property type="project" value="UniProtKB"/>
</dbReference>
<dbReference type="GO" id="GO:0004427">
    <property type="term" value="F:inorganic diphosphate phosphatase activity"/>
    <property type="evidence" value="ECO:0000314"/>
    <property type="project" value="UniProtKB"/>
</dbReference>
<dbReference type="GO" id="GO:0030145">
    <property type="term" value="F:manganese ion binding"/>
    <property type="evidence" value="ECO:0000314"/>
    <property type="project" value="UniProtKB"/>
</dbReference>
<dbReference type="GO" id="GO:0006796">
    <property type="term" value="P:phosphate-containing compound metabolic process"/>
    <property type="evidence" value="ECO:0000314"/>
    <property type="project" value="UniProtKB"/>
</dbReference>
<dbReference type="CDD" id="cd04597">
    <property type="entry name" value="CBS_pair_inorgPPase"/>
    <property type="match status" value="1"/>
</dbReference>
<dbReference type="FunFam" id="3.10.310.20:FF:000001">
    <property type="entry name" value="Probable manganese-dependent inorganic pyrophosphatase"/>
    <property type="match status" value="1"/>
</dbReference>
<dbReference type="FunFam" id="3.90.1640.10:FF:000001">
    <property type="entry name" value="Probable manganese-dependent inorganic pyrophosphatase"/>
    <property type="match status" value="1"/>
</dbReference>
<dbReference type="Gene3D" id="3.10.580.10">
    <property type="entry name" value="CBS-domain"/>
    <property type="match status" value="1"/>
</dbReference>
<dbReference type="Gene3D" id="3.10.310.20">
    <property type="entry name" value="DHHA2 domain"/>
    <property type="match status" value="1"/>
</dbReference>
<dbReference type="Gene3D" id="3.40.1390.20">
    <property type="entry name" value="HprK N-terminal domain-like"/>
    <property type="match status" value="1"/>
</dbReference>
<dbReference type="InterPro" id="IPR000644">
    <property type="entry name" value="CBS_dom"/>
</dbReference>
<dbReference type="InterPro" id="IPR046342">
    <property type="entry name" value="CBS_dom_sf"/>
</dbReference>
<dbReference type="InterPro" id="IPR001667">
    <property type="entry name" value="DDH_dom"/>
</dbReference>
<dbReference type="InterPro" id="IPR038763">
    <property type="entry name" value="DHH_sf"/>
</dbReference>
<dbReference type="InterPro" id="IPR004097">
    <property type="entry name" value="DHHA2"/>
</dbReference>
<dbReference type="InterPro" id="IPR038222">
    <property type="entry name" value="DHHA2_dom_sf"/>
</dbReference>
<dbReference type="InterPro" id="IPR010766">
    <property type="entry name" value="DRTGG"/>
</dbReference>
<dbReference type="InterPro" id="IPR028979">
    <property type="entry name" value="Ser_kin/Pase_Hpr-like_N_sf"/>
</dbReference>
<dbReference type="NCBIfam" id="NF003877">
    <property type="entry name" value="PRK05427.1"/>
    <property type="match status" value="1"/>
</dbReference>
<dbReference type="NCBIfam" id="NF011441">
    <property type="entry name" value="PRK14869.1-3"/>
    <property type="match status" value="1"/>
</dbReference>
<dbReference type="NCBIfam" id="NF011442">
    <property type="entry name" value="PRK14869.1-4"/>
    <property type="match status" value="1"/>
</dbReference>
<dbReference type="NCBIfam" id="NF011443">
    <property type="entry name" value="PRK14869.1-5"/>
    <property type="match status" value="1"/>
</dbReference>
<dbReference type="PANTHER" id="PTHR12112">
    <property type="entry name" value="BNIP - RELATED"/>
    <property type="match status" value="1"/>
</dbReference>
<dbReference type="PANTHER" id="PTHR12112:SF22">
    <property type="entry name" value="MANGANESE-DEPENDENT INORGANIC PYROPHOSPHATASE-RELATED"/>
    <property type="match status" value="1"/>
</dbReference>
<dbReference type="Pfam" id="PF00571">
    <property type="entry name" value="CBS"/>
    <property type="match status" value="2"/>
</dbReference>
<dbReference type="Pfam" id="PF01368">
    <property type="entry name" value="DHH"/>
    <property type="match status" value="2"/>
</dbReference>
<dbReference type="Pfam" id="PF02833">
    <property type="entry name" value="DHHA2"/>
    <property type="match status" value="1"/>
</dbReference>
<dbReference type="Pfam" id="PF07085">
    <property type="entry name" value="DRTGG"/>
    <property type="match status" value="1"/>
</dbReference>
<dbReference type="SMART" id="SM00116">
    <property type="entry name" value="CBS"/>
    <property type="match status" value="2"/>
</dbReference>
<dbReference type="SMART" id="SM01131">
    <property type="entry name" value="DHHA2"/>
    <property type="match status" value="1"/>
</dbReference>
<dbReference type="SUPFAM" id="SSF54631">
    <property type="entry name" value="CBS-domain pair"/>
    <property type="match status" value="1"/>
</dbReference>
<dbReference type="SUPFAM" id="SSF64182">
    <property type="entry name" value="DHH phosphoesterases"/>
    <property type="match status" value="1"/>
</dbReference>
<dbReference type="SUPFAM" id="SSF75138">
    <property type="entry name" value="HprK N-terminal domain-like"/>
    <property type="match status" value="1"/>
</dbReference>
<dbReference type="PROSITE" id="PS51371">
    <property type="entry name" value="CBS"/>
    <property type="match status" value="2"/>
</dbReference>
<gene>
    <name type="ordered locus">CPE2055</name>
</gene>
<name>IPYR_CLOPE</name>
<protein>
    <recommendedName>
        <fullName evidence="6 8">Cobalt-dependent inorganic pyrophosphatase</fullName>
        <ecNumber evidence="4 5">3.6.1.1</ecNumber>
    </recommendedName>
    <alternativeName>
        <fullName evidence="6">CBS domain-containing pyrophosphatase</fullName>
        <shortName evidence="6">cpCBS-PPase</shortName>
    </alternativeName>
    <alternativeName>
        <fullName>Nucleotide-regulated inorganic pyrophosphatase</fullName>
    </alternativeName>
    <alternativeName>
        <fullName evidence="1">Pyrophosphate phospho-hydrolase</fullName>
        <shortName evidence="1">PPase</shortName>
    </alternativeName>
</protein>
<organism>
    <name type="scientific">Clostridium perfringens (strain 13 / Type A)</name>
    <dbReference type="NCBI Taxonomy" id="195102"/>
    <lineage>
        <taxon>Bacteria</taxon>
        <taxon>Bacillati</taxon>
        <taxon>Bacillota</taxon>
        <taxon>Clostridia</taxon>
        <taxon>Eubacteriales</taxon>
        <taxon>Clostridiaceae</taxon>
        <taxon>Clostridium</taxon>
    </lineage>
</organism>
<evidence type="ECO:0000250" key="1">
    <source>
        <dbReference type="UniProtKB" id="P0A7A9"/>
    </source>
</evidence>
<evidence type="ECO:0000255" key="2"/>
<evidence type="ECO:0000255" key="3">
    <source>
        <dbReference type="PROSITE-ProRule" id="PRU00703"/>
    </source>
</evidence>
<evidence type="ECO:0000269" key="4">
    <source>
    </source>
</evidence>
<evidence type="ECO:0000269" key="5">
    <source>
    </source>
</evidence>
<evidence type="ECO:0000303" key="6">
    <source>
    </source>
</evidence>
<evidence type="ECO:0000305" key="7"/>
<evidence type="ECO:0000312" key="8">
    <source>
        <dbReference type="EMBL" id="BAB81761.1"/>
    </source>
</evidence>
<evidence type="ECO:0000312" key="9">
    <source>
        <dbReference type="PDB" id="3L31"/>
    </source>
</evidence>
<evidence type="ECO:0007829" key="10">
    <source>
        <dbReference type="PDB" id="3L2B"/>
    </source>
</evidence>
<evidence type="ECO:0007829" key="11">
    <source>
        <dbReference type="PDB" id="3L31"/>
    </source>
</evidence>
<sequence length="549" mass="60528">MKDVIYITGHKNPDSDSICAALAYAEFKNKTQDTPAIPVRLGNVSQETQYILDYFGVEAPQFLETVKLKVEDLEMDKIAPLAPEVSLKMAWNIMRDKNLKSIPVADGNNHLLGMLSTSNITATYMDIWDSNILAKSATSLDNILDTLSAEAQNINEERKVFPGKVVVAAMQAESLKEFISEGDIAIAGDRAEIQAELIELKVSLLIVTGGHTPSKEIIELAKKNNITVITTPHDSFTASRLIVQSLPVDYVMTKDNLVAVSTDDLVEDVKVTMSETRYSNYPVIDENNKVVGSIARFHLISTHKKKVIQVDHNERGQSVHGLEDAEVLEIIDHHRVADIQTGNPIYFRNEPLGSTSTIVAKRFFENGIRPSREAAGLLCGAIISDTLLFKSPTCTPQDVKMCRKLAEIAGIVPETFAKEMFKAGTSLKGKSIEEIFNADFKPFTIEGVKVGVAQVNTMDIEGFMPLKGEMLDYMNQKAESMGLEMIMLLLTDIINEGSQILVAGRSPEIAEEAFKVKLEDSTTFLPGVLSRKKQVVPPLTQIITTRVSK</sequence>
<accession>Q8XIQ9</accession>
<proteinExistence type="evidence at protein level"/>
<feature type="chain" id="PRO_0000421852" description="Cobalt-dependent inorganic pyrophosphatase">
    <location>
        <begin position="1"/>
        <end position="549"/>
    </location>
</feature>
<feature type="domain" description="CBS 1" evidence="3">
    <location>
        <begin position="74"/>
        <end position="130"/>
    </location>
</feature>
<feature type="domain" description="CBS 2" evidence="3">
    <location>
        <begin position="252"/>
        <end position="310"/>
    </location>
</feature>
<feature type="binding site" evidence="4">
    <location>
        <position position="100"/>
    </location>
    <ligand>
        <name>AMP</name>
        <dbReference type="ChEBI" id="CHEBI:456215"/>
    </ligand>
</feature>
<feature type="binding site" evidence="4">
    <location>
        <begin position="116"/>
        <end position="119"/>
    </location>
    <ligand>
        <name>AMP</name>
        <dbReference type="ChEBI" id="CHEBI:456215"/>
    </ligand>
</feature>
<feature type="binding site" evidence="4">
    <location>
        <position position="253"/>
    </location>
    <ligand>
        <name>AMP</name>
        <dbReference type="ChEBI" id="CHEBI:456215"/>
    </ligand>
</feature>
<feature type="binding site" evidence="4">
    <location>
        <position position="258"/>
    </location>
    <ligand>
        <name>AMP</name>
        <dbReference type="ChEBI" id="CHEBI:456215"/>
    </ligand>
</feature>
<feature type="binding site" evidence="4">
    <location>
        <begin position="278"/>
        <end position="280"/>
    </location>
    <ligand>
        <name>AMP</name>
        <dbReference type="ChEBI" id="CHEBI:456215"/>
    </ligand>
</feature>
<feature type="helix" evidence="10">
    <location>
        <begin position="70"/>
        <end position="72"/>
    </location>
</feature>
<feature type="helix" evidence="10">
    <location>
        <begin position="87"/>
        <end position="96"/>
    </location>
</feature>
<feature type="strand" evidence="10">
    <location>
        <begin position="100"/>
        <end position="105"/>
    </location>
</feature>
<feature type="strand" evidence="10">
    <location>
        <begin position="110"/>
        <end position="116"/>
    </location>
</feature>
<feature type="helix" evidence="10">
    <location>
        <begin position="117"/>
        <end position="125"/>
    </location>
</feature>
<feature type="helix" evidence="10">
    <location>
        <begin position="132"/>
        <end position="135"/>
    </location>
</feature>
<feature type="helix" evidence="10">
    <location>
        <begin position="140"/>
        <end position="146"/>
    </location>
</feature>
<feature type="strand" evidence="10">
    <location>
        <begin position="150"/>
        <end position="153"/>
    </location>
</feature>
<feature type="strand" evidence="10">
    <location>
        <begin position="165"/>
        <end position="167"/>
    </location>
</feature>
<feature type="helix" evidence="10">
    <location>
        <begin position="172"/>
        <end position="177"/>
    </location>
</feature>
<feature type="strand" evidence="10">
    <location>
        <begin position="184"/>
        <end position="187"/>
    </location>
</feature>
<feature type="helix" evidence="10">
    <location>
        <begin position="191"/>
        <end position="199"/>
    </location>
</feature>
<feature type="strand" evidence="10">
    <location>
        <begin position="203"/>
        <end position="207"/>
    </location>
</feature>
<feature type="helix" evidence="10">
    <location>
        <begin position="215"/>
        <end position="224"/>
    </location>
</feature>
<feature type="strand" evidence="10">
    <location>
        <begin position="227"/>
        <end position="230"/>
    </location>
</feature>
<feature type="helix" evidence="10">
    <location>
        <begin position="235"/>
        <end position="241"/>
    </location>
</feature>
<feature type="helix" evidence="10">
    <location>
        <begin position="242"/>
        <end position="245"/>
    </location>
</feature>
<feature type="helix" evidence="10">
    <location>
        <begin position="248"/>
        <end position="251"/>
    </location>
</feature>
<feature type="helix" evidence="10">
    <location>
        <begin position="266"/>
        <end position="276"/>
    </location>
</feature>
<feature type="strand" evidence="10">
    <location>
        <begin position="279"/>
        <end position="284"/>
    </location>
</feature>
<feature type="strand" evidence="10">
    <location>
        <begin position="289"/>
        <end position="295"/>
    </location>
</feature>
<feature type="helix" evidence="11">
    <location>
        <begin position="296"/>
        <end position="298"/>
    </location>
</feature>
<keyword id="KW-0002">3D-structure</keyword>
<keyword id="KW-0129">CBS domain</keyword>
<keyword id="KW-0378">Hydrolase</keyword>
<keyword id="KW-0464">Manganese</keyword>
<keyword id="KW-0479">Metal-binding</keyword>
<keyword id="KW-0547">Nucleotide-binding</keyword>
<keyword id="KW-1185">Reference proteome</keyword>
<keyword id="KW-0677">Repeat</keyword>
<reference evidence="8" key="1">
    <citation type="journal article" date="2002" name="Proc. Natl. Acad. Sci. U.S.A.">
        <title>Complete genome sequence of Clostridium perfringens, an anaerobic flesh-eater.</title>
        <authorList>
            <person name="Shimizu T."/>
            <person name="Ohtani K."/>
            <person name="Hirakawa H."/>
            <person name="Ohshima K."/>
            <person name="Yamashita A."/>
            <person name="Shiba T."/>
            <person name="Ogasawara N."/>
            <person name="Hattori M."/>
            <person name="Kuhara S."/>
            <person name="Hayashi H."/>
        </authorList>
    </citation>
    <scope>NUCLEOTIDE SEQUENCE [LARGE SCALE GENOMIC DNA]</scope>
    <source>
        <strain>13 / Type A</strain>
    </source>
</reference>
<reference evidence="7 9" key="2">
    <citation type="journal article" date="2010" name="J. Mol. Biol.">
        <title>Crystal structures of the CBS and DRTGG domains of the regulatory region of Clostridiumperfringens pyrophosphatase complexed with the inhibitor, AMP, and activator, diadenosine tetraphosphate.</title>
        <authorList>
            <person name="Tuominen H."/>
            <person name="Salminen A."/>
            <person name="Oksanen E."/>
            <person name="Jamsen J."/>
            <person name="Heikkila O."/>
            <person name="Lehtio L."/>
            <person name="Magretova N.N."/>
            <person name="Goldman A."/>
            <person name="Baykov A.A."/>
            <person name="Lahti R."/>
        </authorList>
    </citation>
    <scope>CATALYTIC ACTIVITY</scope>
    <scope>ACTIVITY REGULATION</scope>
    <scope>SUBUNIT</scope>
    <scope>X-RAY CRYSTALLOGRAPHY (2.27 ANGSTROMS) OF 66-306 IN COMPLEX WITH AMP</scope>
</reference>
<reference evidence="7" key="3">
    <citation type="journal article" date="2012" name="Biochemistry (Mosc.)">
        <title>Fast kinetics of nucleotide binding to Clostridium perfringens family II pyrophosphatase containing CBS and DRTGG domains.</title>
        <authorList>
            <person name="Jamsen J."/>
            <person name="Baykov A.A."/>
            <person name="Lahti R."/>
        </authorList>
    </citation>
    <scope>FUNCTION</scope>
    <scope>CATALYTIC ACTIVITY</scope>
    <scope>COFACTOR</scope>
    <scope>ACTIVITY REGULATION</scope>
    <scope>BIOPHYSICOCHEMICAL PROPERTIES</scope>
</reference>